<comment type="function">
    <text evidence="1">This protein binds to the 23S rRNA, and is important in its secondary structure. It is located near the subunit interface in the base of the L7/L12 stalk, and near the tRNA binding site of the peptidyltransferase center.</text>
</comment>
<comment type="subunit">
    <text evidence="1">Part of the 50S ribosomal subunit.</text>
</comment>
<comment type="similarity">
    <text evidence="1">Belongs to the universal ribosomal protein uL6 family.</text>
</comment>
<sequence>MSRIGNKVITLPAGVEIINKDNVVTVKGPKGQLTREFNKNIGITVEGTEVTVTRPNDSKEMKTIHGTTRANLNNMVVGVSEGFKKALEMRGVGYRAQLQGSKLVLSVGKSHQDEVEAPEGVTFEVPTPTTINVIGINKESVGQTAAYVRSLRSPEPYKGKGIRYVGEFVRRKEGKTGK</sequence>
<feature type="chain" id="PRO_0000260942" description="Large ribosomal subunit protein uL6">
    <location>
        <begin position="1"/>
        <end position="178"/>
    </location>
</feature>
<dbReference type="EMBL" id="AE009948">
    <property type="protein sequence ID" value="AAM98981.1"/>
    <property type="molecule type" value="Genomic_DNA"/>
</dbReference>
<dbReference type="RefSeq" id="NP_687109.1">
    <property type="nucleotide sequence ID" value="NC_004116.1"/>
</dbReference>
<dbReference type="RefSeq" id="WP_000086621.1">
    <property type="nucleotide sequence ID" value="NC_004116.1"/>
</dbReference>
<dbReference type="SMR" id="Q8E2B9"/>
<dbReference type="STRING" id="208435.SAG0073"/>
<dbReference type="KEGG" id="sag:SAG0073"/>
<dbReference type="PATRIC" id="fig|208435.3.peg.72"/>
<dbReference type="HOGENOM" id="CLU_065464_1_2_9"/>
<dbReference type="OrthoDB" id="9805007at2"/>
<dbReference type="Proteomes" id="UP000000821">
    <property type="component" value="Chromosome"/>
</dbReference>
<dbReference type="GO" id="GO:0022625">
    <property type="term" value="C:cytosolic large ribosomal subunit"/>
    <property type="evidence" value="ECO:0007669"/>
    <property type="project" value="TreeGrafter"/>
</dbReference>
<dbReference type="GO" id="GO:0019843">
    <property type="term" value="F:rRNA binding"/>
    <property type="evidence" value="ECO:0007669"/>
    <property type="project" value="UniProtKB-UniRule"/>
</dbReference>
<dbReference type="GO" id="GO:0003735">
    <property type="term" value="F:structural constituent of ribosome"/>
    <property type="evidence" value="ECO:0007669"/>
    <property type="project" value="InterPro"/>
</dbReference>
<dbReference type="GO" id="GO:0002181">
    <property type="term" value="P:cytoplasmic translation"/>
    <property type="evidence" value="ECO:0007669"/>
    <property type="project" value="TreeGrafter"/>
</dbReference>
<dbReference type="FunFam" id="3.90.930.12:FF:000001">
    <property type="entry name" value="50S ribosomal protein L6"/>
    <property type="match status" value="1"/>
</dbReference>
<dbReference type="FunFam" id="3.90.930.12:FF:000002">
    <property type="entry name" value="50S ribosomal protein L6"/>
    <property type="match status" value="1"/>
</dbReference>
<dbReference type="Gene3D" id="3.90.930.12">
    <property type="entry name" value="Ribosomal protein L6, alpha-beta domain"/>
    <property type="match status" value="2"/>
</dbReference>
<dbReference type="HAMAP" id="MF_01365_B">
    <property type="entry name" value="Ribosomal_uL6_B"/>
    <property type="match status" value="1"/>
</dbReference>
<dbReference type="InterPro" id="IPR000702">
    <property type="entry name" value="Ribosomal_uL6-like"/>
</dbReference>
<dbReference type="InterPro" id="IPR036789">
    <property type="entry name" value="Ribosomal_uL6-like_a/b-dom_sf"/>
</dbReference>
<dbReference type="InterPro" id="IPR020040">
    <property type="entry name" value="Ribosomal_uL6_a/b-dom"/>
</dbReference>
<dbReference type="InterPro" id="IPR019906">
    <property type="entry name" value="Ribosomal_uL6_bac-type"/>
</dbReference>
<dbReference type="InterPro" id="IPR002358">
    <property type="entry name" value="Ribosomal_uL6_CS"/>
</dbReference>
<dbReference type="NCBIfam" id="TIGR03654">
    <property type="entry name" value="L6_bact"/>
    <property type="match status" value="1"/>
</dbReference>
<dbReference type="PANTHER" id="PTHR11655">
    <property type="entry name" value="60S/50S RIBOSOMAL PROTEIN L6/L9"/>
    <property type="match status" value="1"/>
</dbReference>
<dbReference type="PANTHER" id="PTHR11655:SF14">
    <property type="entry name" value="LARGE RIBOSOMAL SUBUNIT PROTEIN UL6M"/>
    <property type="match status" value="1"/>
</dbReference>
<dbReference type="Pfam" id="PF00347">
    <property type="entry name" value="Ribosomal_L6"/>
    <property type="match status" value="2"/>
</dbReference>
<dbReference type="PIRSF" id="PIRSF002162">
    <property type="entry name" value="Ribosomal_L6"/>
    <property type="match status" value="1"/>
</dbReference>
<dbReference type="PRINTS" id="PR00059">
    <property type="entry name" value="RIBOSOMALL6"/>
</dbReference>
<dbReference type="SUPFAM" id="SSF56053">
    <property type="entry name" value="Ribosomal protein L6"/>
    <property type="match status" value="2"/>
</dbReference>
<dbReference type="PROSITE" id="PS00525">
    <property type="entry name" value="RIBOSOMAL_L6_1"/>
    <property type="match status" value="1"/>
</dbReference>
<reference key="1">
    <citation type="journal article" date="2002" name="Proc. Natl. Acad. Sci. U.S.A.">
        <title>Complete genome sequence and comparative genomic analysis of an emerging human pathogen, serotype V Streptococcus agalactiae.</title>
        <authorList>
            <person name="Tettelin H."/>
            <person name="Masignani V."/>
            <person name="Cieslewicz M.J."/>
            <person name="Eisen J.A."/>
            <person name="Peterson S.N."/>
            <person name="Wessels M.R."/>
            <person name="Paulsen I.T."/>
            <person name="Nelson K.E."/>
            <person name="Margarit I."/>
            <person name="Read T.D."/>
            <person name="Madoff L.C."/>
            <person name="Wolf A.M."/>
            <person name="Beanan M.J."/>
            <person name="Brinkac L.M."/>
            <person name="Daugherty S.C."/>
            <person name="DeBoy R.T."/>
            <person name="Durkin A.S."/>
            <person name="Kolonay J.F."/>
            <person name="Madupu R."/>
            <person name="Lewis M.R."/>
            <person name="Radune D."/>
            <person name="Fedorova N.B."/>
            <person name="Scanlan D."/>
            <person name="Khouri H.M."/>
            <person name="Mulligan S."/>
            <person name="Carty H.A."/>
            <person name="Cline R.T."/>
            <person name="Van Aken S.E."/>
            <person name="Gill J."/>
            <person name="Scarselli M."/>
            <person name="Mora M."/>
            <person name="Iacobini E.T."/>
            <person name="Brettoni C."/>
            <person name="Galli G."/>
            <person name="Mariani M."/>
            <person name="Vegni F."/>
            <person name="Maione D."/>
            <person name="Rinaudo D."/>
            <person name="Rappuoli R."/>
            <person name="Telford J.L."/>
            <person name="Kasper D.L."/>
            <person name="Grandi G."/>
            <person name="Fraser C.M."/>
        </authorList>
    </citation>
    <scope>NUCLEOTIDE SEQUENCE [LARGE SCALE GENOMIC DNA]</scope>
    <source>
        <strain>ATCC BAA-611 / 2603 V/R</strain>
    </source>
</reference>
<keyword id="KW-1185">Reference proteome</keyword>
<keyword id="KW-0687">Ribonucleoprotein</keyword>
<keyword id="KW-0689">Ribosomal protein</keyword>
<keyword id="KW-0694">RNA-binding</keyword>
<keyword id="KW-0699">rRNA-binding</keyword>
<name>RL6_STRA5</name>
<evidence type="ECO:0000255" key="1">
    <source>
        <dbReference type="HAMAP-Rule" id="MF_01365"/>
    </source>
</evidence>
<evidence type="ECO:0000305" key="2"/>
<protein>
    <recommendedName>
        <fullName evidence="1">Large ribosomal subunit protein uL6</fullName>
    </recommendedName>
    <alternativeName>
        <fullName evidence="2">50S ribosomal protein L6</fullName>
    </alternativeName>
</protein>
<gene>
    <name evidence="1" type="primary">rplF</name>
    <name type="ordered locus">SAG0073</name>
</gene>
<organism>
    <name type="scientific">Streptococcus agalactiae serotype V (strain ATCC BAA-611 / 2603 V/R)</name>
    <dbReference type="NCBI Taxonomy" id="208435"/>
    <lineage>
        <taxon>Bacteria</taxon>
        <taxon>Bacillati</taxon>
        <taxon>Bacillota</taxon>
        <taxon>Bacilli</taxon>
        <taxon>Lactobacillales</taxon>
        <taxon>Streptococcaceae</taxon>
        <taxon>Streptococcus</taxon>
    </lineage>
</organism>
<accession>Q8E2B9</accession>
<proteinExistence type="inferred from homology"/>